<name>DKGA_ECO57</name>
<gene>
    <name evidence="2" type="primary">dkgA</name>
    <name type="ordered locus">Z4365</name>
    <name type="ordered locus">ECs3896</name>
</gene>
<feature type="chain" id="PRO_0000124600" description="Methylglyoxal reductase DkgA">
    <location>
        <begin position="1"/>
        <end position="275"/>
    </location>
</feature>
<feature type="active site" description="Proton donor" evidence="1">
    <location>
        <position position="51"/>
    </location>
</feature>
<feature type="binding site" evidence="1">
    <location>
        <position position="107"/>
    </location>
    <ligand>
        <name>substrate</name>
    </ligand>
</feature>
<feature type="binding site" evidence="1">
    <location>
        <begin position="187"/>
        <end position="241"/>
    </location>
    <ligand>
        <name>NADP(+)</name>
        <dbReference type="ChEBI" id="CHEBI:58349"/>
    </ligand>
</feature>
<accession>Q8XBT6</accession>
<dbReference type="EC" id="1.1.1.-" evidence="2"/>
<dbReference type="EMBL" id="AE005174">
    <property type="protein sequence ID" value="AAG58148.1"/>
    <property type="status" value="ALT_INIT"/>
    <property type="molecule type" value="Genomic_DNA"/>
</dbReference>
<dbReference type="EMBL" id="BA000007">
    <property type="protein sequence ID" value="BAB37319.2"/>
    <property type="molecule type" value="Genomic_DNA"/>
</dbReference>
<dbReference type="PIR" id="H85960">
    <property type="entry name" value="H85960"/>
</dbReference>
<dbReference type="PIR" id="H91115">
    <property type="entry name" value="H91115"/>
</dbReference>
<dbReference type="RefSeq" id="NP_311923.2">
    <property type="nucleotide sequence ID" value="NC_002695.1"/>
</dbReference>
<dbReference type="RefSeq" id="WP_000013136.1">
    <property type="nucleotide sequence ID" value="NZ_VOAI01000009.1"/>
</dbReference>
<dbReference type="SMR" id="Q8XBT6"/>
<dbReference type="STRING" id="155864.Z4365"/>
<dbReference type="GeneID" id="916279"/>
<dbReference type="KEGG" id="ece:Z4365"/>
<dbReference type="KEGG" id="ecs:ECs_3896"/>
<dbReference type="PATRIC" id="fig|386585.9.peg.4064"/>
<dbReference type="eggNOG" id="COG0656">
    <property type="taxonomic scope" value="Bacteria"/>
</dbReference>
<dbReference type="HOGENOM" id="CLU_023205_0_1_6"/>
<dbReference type="OMA" id="YCLQKNW"/>
<dbReference type="Proteomes" id="UP000000558">
    <property type="component" value="Chromosome"/>
</dbReference>
<dbReference type="Proteomes" id="UP000002519">
    <property type="component" value="Chromosome"/>
</dbReference>
<dbReference type="GO" id="GO:0005737">
    <property type="term" value="C:cytoplasm"/>
    <property type="evidence" value="ECO:0007669"/>
    <property type="project" value="UniProtKB-SubCell"/>
</dbReference>
<dbReference type="GO" id="GO:0050580">
    <property type="term" value="F:2,5-didehydrogluconate reductase activity"/>
    <property type="evidence" value="ECO:0007669"/>
    <property type="project" value="InterPro"/>
</dbReference>
<dbReference type="GO" id="GO:0004033">
    <property type="term" value="F:aldo-keto reductase (NADPH) activity"/>
    <property type="evidence" value="ECO:0007669"/>
    <property type="project" value="TreeGrafter"/>
</dbReference>
<dbReference type="GO" id="GO:0019853">
    <property type="term" value="P:L-ascorbic acid biosynthetic process"/>
    <property type="evidence" value="ECO:0007669"/>
    <property type="project" value="UniProtKB-KW"/>
</dbReference>
<dbReference type="CDD" id="cd19131">
    <property type="entry name" value="AKR_AKR5C2"/>
    <property type="match status" value="1"/>
</dbReference>
<dbReference type="FunFam" id="3.20.20.100:FF:000002">
    <property type="entry name" value="2,5-diketo-D-gluconic acid reductase A"/>
    <property type="match status" value="1"/>
</dbReference>
<dbReference type="Gene3D" id="3.20.20.100">
    <property type="entry name" value="NADP-dependent oxidoreductase domain"/>
    <property type="match status" value="1"/>
</dbReference>
<dbReference type="InterPro" id="IPR020471">
    <property type="entry name" value="AKR"/>
</dbReference>
<dbReference type="InterPro" id="IPR044504">
    <property type="entry name" value="AKR5C2"/>
</dbReference>
<dbReference type="InterPro" id="IPR018170">
    <property type="entry name" value="Aldo/ket_reductase_CS"/>
</dbReference>
<dbReference type="InterPro" id="IPR023210">
    <property type="entry name" value="NADP_OxRdtase_dom"/>
</dbReference>
<dbReference type="InterPro" id="IPR036812">
    <property type="entry name" value="NADP_OxRdtase_dom_sf"/>
</dbReference>
<dbReference type="NCBIfam" id="NF008598">
    <property type="entry name" value="PRK11565.1"/>
    <property type="match status" value="1"/>
</dbReference>
<dbReference type="PANTHER" id="PTHR43827">
    <property type="entry name" value="2,5-DIKETO-D-GLUCONIC ACID REDUCTASE"/>
    <property type="match status" value="1"/>
</dbReference>
<dbReference type="PANTHER" id="PTHR43827:SF3">
    <property type="entry name" value="NADP-DEPENDENT OXIDOREDUCTASE DOMAIN-CONTAINING PROTEIN"/>
    <property type="match status" value="1"/>
</dbReference>
<dbReference type="Pfam" id="PF00248">
    <property type="entry name" value="Aldo_ket_red"/>
    <property type="match status" value="1"/>
</dbReference>
<dbReference type="PIRSF" id="PIRSF000097">
    <property type="entry name" value="AKR"/>
    <property type="match status" value="1"/>
</dbReference>
<dbReference type="PRINTS" id="PR00069">
    <property type="entry name" value="ALDKETRDTASE"/>
</dbReference>
<dbReference type="SUPFAM" id="SSF51430">
    <property type="entry name" value="NAD(P)-linked oxidoreductase"/>
    <property type="match status" value="1"/>
</dbReference>
<dbReference type="PROSITE" id="PS00798">
    <property type="entry name" value="ALDOKETO_REDUCTASE_1"/>
    <property type="match status" value="1"/>
</dbReference>
<dbReference type="PROSITE" id="PS00062">
    <property type="entry name" value="ALDOKETO_REDUCTASE_2"/>
    <property type="match status" value="1"/>
</dbReference>
<dbReference type="PROSITE" id="PS00063">
    <property type="entry name" value="ALDOKETO_REDUCTASE_3"/>
    <property type="match status" value="1"/>
</dbReference>
<comment type="function">
    <text evidence="2">Aldo-keto reductase that significantly contributes to cellular methylglyoxal detoxification by catalyzing the NADPH-dependent conversion of methylglyoxal to acetol.</text>
</comment>
<comment type="catalytic activity">
    <reaction evidence="2">
        <text>hydroxyacetone + NADP(+) = methylglyoxal + NADPH + H(+)</text>
        <dbReference type="Rhea" id="RHEA:27986"/>
        <dbReference type="ChEBI" id="CHEBI:15378"/>
        <dbReference type="ChEBI" id="CHEBI:17158"/>
        <dbReference type="ChEBI" id="CHEBI:27957"/>
        <dbReference type="ChEBI" id="CHEBI:57783"/>
        <dbReference type="ChEBI" id="CHEBI:58349"/>
    </reaction>
</comment>
<comment type="subunit">
    <text evidence="2">Monomer.</text>
</comment>
<comment type="subcellular location">
    <subcellularLocation>
        <location evidence="3">Cytoplasm</location>
    </subcellularLocation>
</comment>
<comment type="similarity">
    <text evidence="3">Belongs to the aldo/keto reductase family.</text>
</comment>
<comment type="sequence caution" evidence="3">
    <conflict type="erroneous initiation">
        <sequence resource="EMBL-CDS" id="AAG58148"/>
    </conflict>
    <text>Truncated N-terminus.</text>
</comment>
<reference key="1">
    <citation type="journal article" date="2001" name="Nature">
        <title>Genome sequence of enterohaemorrhagic Escherichia coli O157:H7.</title>
        <authorList>
            <person name="Perna N.T."/>
            <person name="Plunkett G. III"/>
            <person name="Burland V."/>
            <person name="Mau B."/>
            <person name="Glasner J.D."/>
            <person name="Rose D.J."/>
            <person name="Mayhew G.F."/>
            <person name="Evans P.S."/>
            <person name="Gregor J."/>
            <person name="Kirkpatrick H.A."/>
            <person name="Posfai G."/>
            <person name="Hackett J."/>
            <person name="Klink S."/>
            <person name="Boutin A."/>
            <person name="Shao Y."/>
            <person name="Miller L."/>
            <person name="Grotbeck E.J."/>
            <person name="Davis N.W."/>
            <person name="Lim A."/>
            <person name="Dimalanta E.T."/>
            <person name="Potamousis K."/>
            <person name="Apodaca J."/>
            <person name="Anantharaman T.S."/>
            <person name="Lin J."/>
            <person name="Yen G."/>
            <person name="Schwartz D.C."/>
            <person name="Welch R.A."/>
            <person name="Blattner F.R."/>
        </authorList>
    </citation>
    <scope>NUCLEOTIDE SEQUENCE [LARGE SCALE GENOMIC DNA]</scope>
    <source>
        <strain>O157:H7 / EDL933 / ATCC 700927 / EHEC</strain>
    </source>
</reference>
<reference key="2">
    <citation type="journal article" date="2001" name="DNA Res.">
        <title>Complete genome sequence of enterohemorrhagic Escherichia coli O157:H7 and genomic comparison with a laboratory strain K-12.</title>
        <authorList>
            <person name="Hayashi T."/>
            <person name="Makino K."/>
            <person name="Ohnishi M."/>
            <person name="Kurokawa K."/>
            <person name="Ishii K."/>
            <person name="Yokoyama K."/>
            <person name="Han C.-G."/>
            <person name="Ohtsubo E."/>
            <person name="Nakayama K."/>
            <person name="Murata T."/>
            <person name="Tanaka M."/>
            <person name="Tobe T."/>
            <person name="Iida T."/>
            <person name="Takami H."/>
            <person name="Honda T."/>
            <person name="Sasakawa C."/>
            <person name="Ogasawara N."/>
            <person name="Yasunaga T."/>
            <person name="Kuhara S."/>
            <person name="Shiba T."/>
            <person name="Hattori M."/>
            <person name="Shinagawa H."/>
        </authorList>
    </citation>
    <scope>NUCLEOTIDE SEQUENCE [LARGE SCALE GENOMIC DNA]</scope>
    <source>
        <strain>O157:H7 / Sakai / RIMD 0509952 / EHEC</strain>
    </source>
</reference>
<evidence type="ECO:0000250" key="1"/>
<evidence type="ECO:0000250" key="2">
    <source>
        <dbReference type="UniProtKB" id="Q46857"/>
    </source>
</evidence>
<evidence type="ECO:0000305" key="3"/>
<proteinExistence type="inferred from homology"/>
<sequence>MANPTVIKLQDGNVMPQLGLGVWQASNEEVITAIQKALEVGYRSFDTAAAYKNEEGVGKALKNASVNREELFITTKLWNDDHNRPREALLDSLKKLQLDYIDLYLMHWPVPAIDHYVEAWKGMIELQKEGLIKSIGVCNFQIHHLQRLIDETGVTPVINQIELHPLMQQRQLHAWNATHKIQTESWSPLAQGGKGVFDQKVIRDLADKYGKTPAQIVIRWHLDSGLVVIPKSVTPSRIAENFDVWDFRLDKDELGEIAKLDQGKRLGPDPDQFGG</sequence>
<keyword id="KW-0963">Cytoplasm</keyword>
<keyword id="KW-0521">NADP</keyword>
<keyword id="KW-0560">Oxidoreductase</keyword>
<keyword id="KW-1185">Reference proteome</keyword>
<organism>
    <name type="scientific">Escherichia coli O157:H7</name>
    <dbReference type="NCBI Taxonomy" id="83334"/>
    <lineage>
        <taxon>Bacteria</taxon>
        <taxon>Pseudomonadati</taxon>
        <taxon>Pseudomonadota</taxon>
        <taxon>Gammaproteobacteria</taxon>
        <taxon>Enterobacterales</taxon>
        <taxon>Enterobacteriaceae</taxon>
        <taxon>Escherichia</taxon>
    </lineage>
</organism>
<protein>
    <recommendedName>
        <fullName evidence="2">Methylglyoxal reductase DkgA</fullName>
        <ecNumber evidence="2">1.1.1.-</ecNumber>
    </recommendedName>
</protein>